<comment type="function">
    <text evidence="1">Involved in the modulation of the specificity of the ClpAP-mediated ATP-dependent protein degradation.</text>
</comment>
<comment type="subunit">
    <text evidence="1">Binds to the N-terminal domain of the chaperone ClpA.</text>
</comment>
<comment type="similarity">
    <text evidence="1">Belongs to the ClpS family.</text>
</comment>
<gene>
    <name evidence="1" type="primary">clpS</name>
    <name type="ordered locus">Plav_2797</name>
</gene>
<dbReference type="EMBL" id="CP000774">
    <property type="protein sequence ID" value="ABS64405.1"/>
    <property type="molecule type" value="Genomic_DNA"/>
</dbReference>
<dbReference type="RefSeq" id="WP_012111720.1">
    <property type="nucleotide sequence ID" value="NC_009719.1"/>
</dbReference>
<dbReference type="SMR" id="A7HWX2"/>
<dbReference type="STRING" id="402881.Plav_2797"/>
<dbReference type="KEGG" id="pla:Plav_2797"/>
<dbReference type="eggNOG" id="COG2127">
    <property type="taxonomic scope" value="Bacteria"/>
</dbReference>
<dbReference type="HOGENOM" id="CLU_134358_0_0_5"/>
<dbReference type="OrthoDB" id="9796121at2"/>
<dbReference type="Proteomes" id="UP000006377">
    <property type="component" value="Chromosome"/>
</dbReference>
<dbReference type="GO" id="GO:0030163">
    <property type="term" value="P:protein catabolic process"/>
    <property type="evidence" value="ECO:0007669"/>
    <property type="project" value="InterPro"/>
</dbReference>
<dbReference type="GO" id="GO:0006508">
    <property type="term" value="P:proteolysis"/>
    <property type="evidence" value="ECO:0007669"/>
    <property type="project" value="UniProtKB-UniRule"/>
</dbReference>
<dbReference type="FunFam" id="3.30.1390.10:FF:000002">
    <property type="entry name" value="ATP-dependent Clp protease adapter protein ClpS"/>
    <property type="match status" value="1"/>
</dbReference>
<dbReference type="Gene3D" id="3.30.1390.10">
    <property type="match status" value="1"/>
</dbReference>
<dbReference type="HAMAP" id="MF_00302">
    <property type="entry name" value="ClpS"/>
    <property type="match status" value="1"/>
</dbReference>
<dbReference type="InterPro" id="IPR022935">
    <property type="entry name" value="ClpS"/>
</dbReference>
<dbReference type="InterPro" id="IPR003769">
    <property type="entry name" value="ClpS_core"/>
</dbReference>
<dbReference type="InterPro" id="IPR014719">
    <property type="entry name" value="Ribosomal_bL12_C/ClpS-like"/>
</dbReference>
<dbReference type="NCBIfam" id="NF000669">
    <property type="entry name" value="PRK00033.1-2"/>
    <property type="match status" value="1"/>
</dbReference>
<dbReference type="NCBIfam" id="NF000672">
    <property type="entry name" value="PRK00033.1-5"/>
    <property type="match status" value="1"/>
</dbReference>
<dbReference type="PANTHER" id="PTHR33473:SF19">
    <property type="entry name" value="ATP-DEPENDENT CLP PROTEASE ADAPTER PROTEIN CLPS"/>
    <property type="match status" value="1"/>
</dbReference>
<dbReference type="PANTHER" id="PTHR33473">
    <property type="entry name" value="ATP-DEPENDENT CLP PROTEASE ADAPTER PROTEIN CLPS1, CHLOROPLASTIC"/>
    <property type="match status" value="1"/>
</dbReference>
<dbReference type="Pfam" id="PF02617">
    <property type="entry name" value="ClpS"/>
    <property type="match status" value="1"/>
</dbReference>
<dbReference type="SUPFAM" id="SSF54736">
    <property type="entry name" value="ClpS-like"/>
    <property type="match status" value="1"/>
</dbReference>
<proteinExistence type="inferred from homology"/>
<feature type="chain" id="PRO_1000071981" description="ATP-dependent Clp protease adapter protein ClpS">
    <location>
        <begin position="1"/>
        <end position="110"/>
    </location>
</feature>
<feature type="region of interest" description="Disordered" evidence="2">
    <location>
        <begin position="1"/>
        <end position="27"/>
    </location>
</feature>
<feature type="compositionally biased region" description="Basic and acidic residues" evidence="2">
    <location>
        <begin position="1"/>
        <end position="10"/>
    </location>
</feature>
<name>CLPS_PARL1</name>
<accession>A7HWX2</accession>
<sequence length="110" mass="12564">MSDDRRRGDEDGGAGTGVITKTKPKTKKPSLYKVLLLNDDYTPMEFVVHVLERFFNKGRDEATVIMLHVHQHGVGICGLYTYEVAETKVTQVMDFAQQHQHPLQCTMERE</sequence>
<evidence type="ECO:0000255" key="1">
    <source>
        <dbReference type="HAMAP-Rule" id="MF_00302"/>
    </source>
</evidence>
<evidence type="ECO:0000256" key="2">
    <source>
        <dbReference type="SAM" id="MobiDB-lite"/>
    </source>
</evidence>
<keyword id="KW-1185">Reference proteome</keyword>
<organism>
    <name type="scientific">Parvibaculum lavamentivorans (strain DS-1 / DSM 13023 / NCIMB 13966)</name>
    <dbReference type="NCBI Taxonomy" id="402881"/>
    <lineage>
        <taxon>Bacteria</taxon>
        <taxon>Pseudomonadati</taxon>
        <taxon>Pseudomonadota</taxon>
        <taxon>Alphaproteobacteria</taxon>
        <taxon>Hyphomicrobiales</taxon>
        <taxon>Parvibaculaceae</taxon>
        <taxon>Parvibaculum</taxon>
    </lineage>
</organism>
<protein>
    <recommendedName>
        <fullName evidence="1">ATP-dependent Clp protease adapter protein ClpS</fullName>
    </recommendedName>
</protein>
<reference key="1">
    <citation type="journal article" date="2011" name="Stand. Genomic Sci.">
        <title>Complete genome sequence of Parvibaculum lavamentivorans type strain (DS-1(T)).</title>
        <authorList>
            <person name="Schleheck D."/>
            <person name="Weiss M."/>
            <person name="Pitluck S."/>
            <person name="Bruce D."/>
            <person name="Land M.L."/>
            <person name="Han S."/>
            <person name="Saunders E."/>
            <person name="Tapia R."/>
            <person name="Detter C."/>
            <person name="Brettin T."/>
            <person name="Han J."/>
            <person name="Woyke T."/>
            <person name="Goodwin L."/>
            <person name="Pennacchio L."/>
            <person name="Nolan M."/>
            <person name="Cook A.M."/>
            <person name="Kjelleberg S."/>
            <person name="Thomas T."/>
        </authorList>
    </citation>
    <scope>NUCLEOTIDE SEQUENCE [LARGE SCALE GENOMIC DNA]</scope>
    <source>
        <strain>DS-1 / DSM 13023 / NCIMB 13966</strain>
    </source>
</reference>